<dbReference type="EMBL" id="HE600963">
    <property type="protein sequence ID" value="CAP35510.1"/>
    <property type="molecule type" value="Genomic_DNA"/>
</dbReference>
<dbReference type="SMR" id="A8XSQ8"/>
<dbReference type="FunCoup" id="A8XSQ8">
    <property type="interactions" value="58"/>
</dbReference>
<dbReference type="STRING" id="6238.A8XSQ8"/>
<dbReference type="KEGG" id="cbr:CBG_17980"/>
<dbReference type="CTD" id="8584037"/>
<dbReference type="WormBase" id="CBG17980">
    <property type="protein sequence ID" value="CBP41750"/>
    <property type="gene ID" value="WBGene00037480"/>
    <property type="gene designation" value="Cbr-pal-1"/>
</dbReference>
<dbReference type="eggNOG" id="KOG0848">
    <property type="taxonomic scope" value="Eukaryota"/>
</dbReference>
<dbReference type="HOGENOM" id="CLU_1031470_0_0_1"/>
<dbReference type="InParanoid" id="A8XSQ8"/>
<dbReference type="OMA" id="VWPFMDY"/>
<dbReference type="Proteomes" id="UP000008549">
    <property type="component" value="Unassembled WGS sequence"/>
</dbReference>
<dbReference type="GO" id="GO:0000776">
    <property type="term" value="C:kinetochore"/>
    <property type="evidence" value="ECO:0007669"/>
    <property type="project" value="UniProtKB-KW"/>
</dbReference>
<dbReference type="GO" id="GO:0005634">
    <property type="term" value="C:nucleus"/>
    <property type="evidence" value="ECO:0007669"/>
    <property type="project" value="UniProtKB-SubCell"/>
</dbReference>
<dbReference type="GO" id="GO:0003677">
    <property type="term" value="F:DNA binding"/>
    <property type="evidence" value="ECO:0007669"/>
    <property type="project" value="UniProtKB-KW"/>
</dbReference>
<dbReference type="GO" id="GO:0000981">
    <property type="term" value="F:DNA-binding transcription factor activity, RNA polymerase II-specific"/>
    <property type="evidence" value="ECO:0007669"/>
    <property type="project" value="InterPro"/>
</dbReference>
<dbReference type="CDD" id="cd00086">
    <property type="entry name" value="homeodomain"/>
    <property type="match status" value="1"/>
</dbReference>
<dbReference type="FunFam" id="1.10.10.60:FF:000722">
    <property type="entry name" value="Homeobox protein pal-1"/>
    <property type="match status" value="1"/>
</dbReference>
<dbReference type="Gene3D" id="1.10.10.60">
    <property type="entry name" value="Homeodomain-like"/>
    <property type="match status" value="1"/>
</dbReference>
<dbReference type="InterPro" id="IPR047152">
    <property type="entry name" value="Caudal_homeobox"/>
</dbReference>
<dbReference type="InterPro" id="IPR001356">
    <property type="entry name" value="HD"/>
</dbReference>
<dbReference type="InterPro" id="IPR017970">
    <property type="entry name" value="Homeobox_CS"/>
</dbReference>
<dbReference type="InterPro" id="IPR009057">
    <property type="entry name" value="Homeodomain-like_sf"/>
</dbReference>
<dbReference type="PANTHER" id="PTHR24332">
    <property type="entry name" value="HOMEOBOX PROTEIN CDX"/>
    <property type="match status" value="1"/>
</dbReference>
<dbReference type="PANTHER" id="PTHR24332:SF9">
    <property type="entry name" value="HOMEOTIC PROTEIN CAUDAL"/>
    <property type="match status" value="1"/>
</dbReference>
<dbReference type="Pfam" id="PF00046">
    <property type="entry name" value="Homeodomain"/>
    <property type="match status" value="1"/>
</dbReference>
<dbReference type="SMART" id="SM00389">
    <property type="entry name" value="HOX"/>
    <property type="match status" value="1"/>
</dbReference>
<dbReference type="SUPFAM" id="SSF46689">
    <property type="entry name" value="Homeodomain-like"/>
    <property type="match status" value="1"/>
</dbReference>
<dbReference type="PROSITE" id="PS00027">
    <property type="entry name" value="HOMEOBOX_1"/>
    <property type="match status" value="1"/>
</dbReference>
<dbReference type="PROSITE" id="PS50071">
    <property type="entry name" value="HOMEOBOX_2"/>
    <property type="match status" value="1"/>
</dbReference>
<accession>A8XSQ8</accession>
<gene>
    <name evidence="5" type="primary">pal-1</name>
    <name type="ORF">CBG17980</name>
</gene>
<proteinExistence type="inferred from homology"/>
<protein>
    <recommendedName>
        <fullName evidence="1">Homeobox protein pal-1</fullName>
    </recommendedName>
    <alternativeName>
        <fullName evidence="1">Posterior alae in males protein 1</fullName>
    </alternativeName>
</protein>
<name>PAL1_CAEBR</name>
<keyword id="KW-0010">Activator</keyword>
<keyword id="KW-0137">Centromere</keyword>
<keyword id="KW-0158">Chromosome</keyword>
<keyword id="KW-0217">Developmental protein</keyword>
<keyword id="KW-0238">DNA-binding</keyword>
<keyword id="KW-0371">Homeobox</keyword>
<keyword id="KW-0995">Kinetochore</keyword>
<keyword id="KW-0539">Nucleus</keyword>
<keyword id="KW-1185">Reference proteome</keyword>
<keyword id="KW-0804">Transcription</keyword>
<keyword id="KW-0805">Transcription regulation</keyword>
<evidence type="ECO:0000250" key="1">
    <source>
        <dbReference type="UniProtKB" id="P34766"/>
    </source>
</evidence>
<evidence type="ECO:0000255" key="2"/>
<evidence type="ECO:0000255" key="3">
    <source>
        <dbReference type="PROSITE-ProRule" id="PRU00108"/>
    </source>
</evidence>
<evidence type="ECO:0000256" key="4">
    <source>
        <dbReference type="SAM" id="MobiDB-lite"/>
    </source>
</evidence>
<evidence type="ECO:0000312" key="5">
    <source>
        <dbReference type="EMBL" id="CAP35510.1"/>
    </source>
</evidence>
<organism>
    <name type="scientific">Caenorhabditis briggsae</name>
    <dbReference type="NCBI Taxonomy" id="6238"/>
    <lineage>
        <taxon>Eukaryota</taxon>
        <taxon>Metazoa</taxon>
        <taxon>Ecdysozoa</taxon>
        <taxon>Nematoda</taxon>
        <taxon>Chromadorea</taxon>
        <taxon>Rhabditida</taxon>
        <taxon>Rhabditina</taxon>
        <taxon>Rhabditomorpha</taxon>
        <taxon>Rhabditoidea</taxon>
        <taxon>Rhabditidae</taxon>
        <taxon>Peloderinae</taxon>
        <taxon>Caenorhabditis</taxon>
    </lineage>
</organism>
<reference evidence="5" key="1">
    <citation type="journal article" date="2003" name="PLoS Biol.">
        <title>The genome sequence of Caenorhabditis briggsae: a platform for comparative genomics.</title>
        <authorList>
            <person name="Stein L.D."/>
            <person name="Bao Z."/>
            <person name="Blasiar D."/>
            <person name="Blumenthal T."/>
            <person name="Brent M.R."/>
            <person name="Chen N."/>
            <person name="Chinwalla A."/>
            <person name="Clarke L."/>
            <person name="Clee C."/>
            <person name="Coghlan A."/>
            <person name="Coulson A."/>
            <person name="D'Eustachio P."/>
            <person name="Fitch D.H.A."/>
            <person name="Fulton L.A."/>
            <person name="Fulton R.E."/>
            <person name="Griffiths-Jones S."/>
            <person name="Harris T.W."/>
            <person name="Hillier L.W."/>
            <person name="Kamath R."/>
            <person name="Kuwabara P.E."/>
            <person name="Mardis E.R."/>
            <person name="Marra M.A."/>
            <person name="Miner T.L."/>
            <person name="Minx P."/>
            <person name="Mullikin J.C."/>
            <person name="Plumb R.W."/>
            <person name="Rogers J."/>
            <person name="Schein J.E."/>
            <person name="Sohrmann M."/>
            <person name="Spieth J."/>
            <person name="Stajich J.E."/>
            <person name="Wei C."/>
            <person name="Willey D."/>
            <person name="Wilson R.K."/>
            <person name="Durbin R.M."/>
            <person name="Waterston R.H."/>
        </authorList>
    </citation>
    <scope>NUCLEOTIDE SEQUENCE [LARGE SCALE GENOMIC DNA]</scope>
    <source>
        <strain>AF16</strain>
    </source>
</reference>
<comment type="function">
    <text evidence="1">Transcriptional activator. Interacts with promoter regions for tbx-8.9, tbx-9, elt-1, hnd-1, scrt-1, and vab-7 genes. Binds the sequence ATTTATGAC. Binds to the enhancer region of the hlh-1 gene promoter during embryonic body wall muscle development. Activates the gene for mab-5 in embryo development. Necessary for vab-7 expression in C blastomeres in the posterior of embryos. Required for posterior V6 neuroectoblast cell fate specification during postembryonic neurogenesis (patterning) which generates the characteristic ray lineage during male tail development. Binds to ced-3 promoter and activated expression which is crucial for tail-spike cell death. Has a role in E cell specification in endoderm development and body wall muscle development (By similarity).</text>
</comment>
<comment type="subunit">
    <text evidence="1">Interacts with tir-1 and let-756.</text>
</comment>
<comment type="subcellular location">
    <subcellularLocation>
        <location evidence="1">Nucleus</location>
    </subcellularLocation>
    <subcellularLocation>
        <location evidence="1">Chromosome</location>
        <location evidence="1">Centromere</location>
        <location evidence="1">Kinetochore</location>
    </subcellularLocation>
    <subcellularLocation>
        <location>Chromosome</location>
    </subcellularLocation>
    <text evidence="1">Localized to condensed chromosomes.</text>
</comment>
<comment type="similarity">
    <text evidence="2">Belongs to the Caudal homeobox family.</text>
</comment>
<sequence>MSVDVKSEFSENDSSSSSSSPTNVNNVAWPNYQMMPFMNAQPLRDKMLQPSFDPQLYGRWPQMGEAGFYGHSDIYSTFALPQLSTNGQILPTAEVVEVKPPLSNGSSSSDSGMYPSPNDLTPFPSTSSGIGASSSSSDLQAAAAAAANYQMRAATCYQQSVWPFMDYQQPFPWKMPLGSAGKERRASSDTKSLPTGPGTNNVRVRTADKYRMVYSDYQRLELEKEFHTSAFITSDRKSQLSTMLSLTERQIKIWFQNRRAKDRRDKQKIRL</sequence>
<feature type="chain" id="PRO_0000393938" description="Homeobox protein pal-1">
    <location>
        <begin position="1"/>
        <end position="271"/>
    </location>
</feature>
<feature type="DNA-binding region" description="Homeobox" evidence="3">
    <location>
        <begin position="207"/>
        <end position="266"/>
    </location>
</feature>
<feature type="region of interest" description="Disordered" evidence="4">
    <location>
        <begin position="1"/>
        <end position="25"/>
    </location>
</feature>
<feature type="region of interest" description="Disordered" evidence="4">
    <location>
        <begin position="100"/>
        <end position="135"/>
    </location>
</feature>
<feature type="region of interest" description="Disordered" evidence="4">
    <location>
        <begin position="178"/>
        <end position="202"/>
    </location>
</feature>
<feature type="compositionally biased region" description="Low complexity" evidence="4">
    <location>
        <begin position="100"/>
        <end position="117"/>
    </location>
</feature>
<feature type="compositionally biased region" description="Low complexity" evidence="4">
    <location>
        <begin position="125"/>
        <end position="135"/>
    </location>
</feature>
<feature type="compositionally biased region" description="Polar residues" evidence="4">
    <location>
        <begin position="189"/>
        <end position="202"/>
    </location>
</feature>